<protein>
    <recommendedName>
        <fullName>Iron uptake system component EfeO</fullName>
    </recommendedName>
</protein>
<name>EFEO_ECOK1</name>
<organism>
    <name type="scientific">Escherichia coli O1:K1 / APEC</name>
    <dbReference type="NCBI Taxonomy" id="405955"/>
    <lineage>
        <taxon>Bacteria</taxon>
        <taxon>Pseudomonadati</taxon>
        <taxon>Pseudomonadota</taxon>
        <taxon>Gammaproteobacteria</taxon>
        <taxon>Enterobacterales</taxon>
        <taxon>Enterobacteriaceae</taxon>
        <taxon>Escherichia</taxon>
    </lineage>
</organism>
<sequence>MTINFRRNALQLSVAALFSSAFMANAADIPQVKVTVTDKQCEPMTITVNAGKTQFIIQNHSQKALEWEILKGVMVVEERENIAPGFSQKMTANLQPGEYDMTCGLLTNPKGKLIVKGEATADAAQSDALLSLGGAITAYKAYVMAETTQLVTDTKAFTDAIKAGDIEKAKALYAPTRQHYERIEPIAELFSDLDGSIDAREDDYEQKAADPKFTGFHRLEKALFGDNTTKGMDKYADQLYTDVVDLQKRISELAFPPSKVVGGAAGLIEEVAASKISGEEDRYSHTDLWDFQANVEGSQKIVDLLRPQLQKANPELLAKVDANFKKVDTILAKYRTKDGFENYDKLTDADRNALKGPITALAEDLAQLRGVLGLD</sequence>
<gene>
    <name type="primary">efeO</name>
    <name type="ordered locus">Ecok1_09180</name>
</gene>
<reference key="1">
    <citation type="journal article" date="2007" name="J. Bacteriol.">
        <title>The genome sequence of avian pathogenic Escherichia coli strain O1:K1:H7 shares strong similarities with human extraintestinal pathogenic E. coli genomes.</title>
        <authorList>
            <person name="Johnson T.J."/>
            <person name="Kariyawasam S."/>
            <person name="Wannemuehler Y."/>
            <person name="Mangiamele P."/>
            <person name="Johnson S.J."/>
            <person name="Doetkott C."/>
            <person name="Skyberg J.A."/>
            <person name="Lynne A.M."/>
            <person name="Johnson J.R."/>
            <person name="Nolan L.K."/>
        </authorList>
    </citation>
    <scope>NUCLEOTIDE SEQUENCE [LARGE SCALE GENOMIC DNA]</scope>
</reference>
<comment type="function">
    <text evidence="1">Involved in Fe(2+) uptake. Could be an iron-binding and/or electron-transfer component (By similarity).</text>
</comment>
<comment type="subunit">
    <text evidence="1">Monomer. Part of a ferrous iron transporter composed of EfeU, EfeO and EfeB (By similarity).</text>
</comment>
<comment type="subcellular location">
    <subcellularLocation>
        <location evidence="1">Periplasm</location>
    </subcellularLocation>
</comment>
<comment type="similarity">
    <text evidence="3">Belongs to the EfeM/EfeO family.</text>
</comment>
<proteinExistence type="inferred from homology"/>
<feature type="signal peptide" evidence="2">
    <location>
        <begin position="1"/>
        <end position="26"/>
    </location>
</feature>
<feature type="chain" id="PRO_0000278556" description="Iron uptake system component EfeO">
    <location>
        <begin position="27"/>
        <end position="375"/>
    </location>
</feature>
<keyword id="KW-0574">Periplasm</keyword>
<keyword id="KW-1185">Reference proteome</keyword>
<keyword id="KW-0732">Signal</keyword>
<evidence type="ECO:0000250" key="1"/>
<evidence type="ECO:0000255" key="2"/>
<evidence type="ECO:0000305" key="3"/>
<accession>A1A9S2</accession>
<dbReference type="EMBL" id="CP000468">
    <property type="protein sequence ID" value="ABJ00412.1"/>
    <property type="molecule type" value="Genomic_DNA"/>
</dbReference>
<dbReference type="RefSeq" id="WP_000154379.1">
    <property type="nucleotide sequence ID" value="NZ_CADILS010000016.1"/>
</dbReference>
<dbReference type="SMR" id="A1A9S2"/>
<dbReference type="KEGG" id="ecv:APECO1_108"/>
<dbReference type="HOGENOM" id="CLU_050342_2_1_6"/>
<dbReference type="Proteomes" id="UP000008216">
    <property type="component" value="Chromosome"/>
</dbReference>
<dbReference type="GO" id="GO:0042597">
    <property type="term" value="C:periplasmic space"/>
    <property type="evidence" value="ECO:0007669"/>
    <property type="project" value="UniProtKB-SubCell"/>
</dbReference>
<dbReference type="CDD" id="cd14656">
    <property type="entry name" value="Imelysin-like_EfeO"/>
    <property type="match status" value="1"/>
</dbReference>
<dbReference type="FunFam" id="1.20.1420.20:FF:000001">
    <property type="entry name" value="Iron uptake system component EfeO"/>
    <property type="match status" value="1"/>
</dbReference>
<dbReference type="FunFam" id="2.60.40.420:FF:000052">
    <property type="entry name" value="Iron uptake system component EfeO"/>
    <property type="match status" value="1"/>
</dbReference>
<dbReference type="Gene3D" id="2.60.40.420">
    <property type="entry name" value="Cupredoxins - blue copper proteins"/>
    <property type="match status" value="1"/>
</dbReference>
<dbReference type="Gene3D" id="1.20.1420.20">
    <property type="entry name" value="M75 peptidase, HXXE motif"/>
    <property type="match status" value="1"/>
</dbReference>
<dbReference type="InterPro" id="IPR008972">
    <property type="entry name" value="Cupredoxin"/>
</dbReference>
<dbReference type="InterPro" id="IPR050894">
    <property type="entry name" value="EfeM/EfeO_iron_uptake"/>
</dbReference>
<dbReference type="InterPro" id="IPR028096">
    <property type="entry name" value="EfeO_Cupredoxin"/>
</dbReference>
<dbReference type="InterPro" id="IPR018976">
    <property type="entry name" value="Imelysin-like"/>
</dbReference>
<dbReference type="InterPro" id="IPR034981">
    <property type="entry name" value="Imelysin-like_EfeO/Algp7"/>
</dbReference>
<dbReference type="InterPro" id="IPR038352">
    <property type="entry name" value="Imelysin_sf"/>
</dbReference>
<dbReference type="InterPro" id="IPR053377">
    <property type="entry name" value="Iron_uptake_EfeM/EfeO"/>
</dbReference>
<dbReference type="NCBIfam" id="NF041757">
    <property type="entry name" value="EfeO"/>
    <property type="match status" value="1"/>
</dbReference>
<dbReference type="NCBIfam" id="NF007697">
    <property type="entry name" value="PRK10378.1"/>
    <property type="match status" value="1"/>
</dbReference>
<dbReference type="PANTHER" id="PTHR39192">
    <property type="entry name" value="IRON UPTAKE SYSTEM COMPONENT EFEO"/>
    <property type="match status" value="1"/>
</dbReference>
<dbReference type="PANTHER" id="PTHR39192:SF1">
    <property type="entry name" value="IRON UPTAKE SYSTEM COMPONENT EFEO"/>
    <property type="match status" value="1"/>
</dbReference>
<dbReference type="Pfam" id="PF13473">
    <property type="entry name" value="Cupredoxin_1"/>
    <property type="match status" value="1"/>
</dbReference>
<dbReference type="Pfam" id="PF09375">
    <property type="entry name" value="Peptidase_M75"/>
    <property type="match status" value="1"/>
</dbReference>
<dbReference type="SUPFAM" id="SSF49503">
    <property type="entry name" value="Cupredoxins"/>
    <property type="match status" value="1"/>
</dbReference>